<dbReference type="EC" id="2.7.7.7" evidence="1"/>
<dbReference type="EMBL" id="BX294135">
    <property type="protein sequence ID" value="CAD71997.1"/>
    <property type="molecule type" value="Genomic_DNA"/>
</dbReference>
<dbReference type="RefSeq" id="NP_864318.1">
    <property type="nucleotide sequence ID" value="NC_005027.1"/>
</dbReference>
<dbReference type="SMR" id="Q7UXK9"/>
<dbReference type="STRING" id="243090.RB1262"/>
<dbReference type="EnsemblBacteria" id="CAD71997">
    <property type="protein sequence ID" value="CAD71997"/>
    <property type="gene ID" value="RB1262"/>
</dbReference>
<dbReference type="KEGG" id="rba:RB1262"/>
<dbReference type="PATRIC" id="fig|243090.15.peg.577"/>
<dbReference type="eggNOG" id="COG0587">
    <property type="taxonomic scope" value="Bacteria"/>
</dbReference>
<dbReference type="HOGENOM" id="CLU_001600_4_0_0"/>
<dbReference type="InParanoid" id="Q7UXK9"/>
<dbReference type="OrthoDB" id="9803237at2"/>
<dbReference type="Proteomes" id="UP000001025">
    <property type="component" value="Chromosome"/>
</dbReference>
<dbReference type="GO" id="GO:0005737">
    <property type="term" value="C:cytoplasm"/>
    <property type="evidence" value="ECO:0007669"/>
    <property type="project" value="UniProtKB-SubCell"/>
</dbReference>
<dbReference type="GO" id="GO:0008408">
    <property type="term" value="F:3'-5' exonuclease activity"/>
    <property type="evidence" value="ECO:0007669"/>
    <property type="project" value="InterPro"/>
</dbReference>
<dbReference type="GO" id="GO:0003887">
    <property type="term" value="F:DNA-directed DNA polymerase activity"/>
    <property type="evidence" value="ECO:0000318"/>
    <property type="project" value="GO_Central"/>
</dbReference>
<dbReference type="GO" id="GO:0003676">
    <property type="term" value="F:nucleic acid binding"/>
    <property type="evidence" value="ECO:0007669"/>
    <property type="project" value="InterPro"/>
</dbReference>
<dbReference type="GO" id="GO:0006281">
    <property type="term" value="P:DNA repair"/>
    <property type="evidence" value="ECO:0007669"/>
    <property type="project" value="UniProtKB-UniRule"/>
</dbReference>
<dbReference type="GO" id="GO:0006260">
    <property type="term" value="P:DNA replication"/>
    <property type="evidence" value="ECO:0007669"/>
    <property type="project" value="UniProtKB-KW"/>
</dbReference>
<dbReference type="CDD" id="cd04485">
    <property type="entry name" value="DnaE_OBF"/>
    <property type="match status" value="1"/>
</dbReference>
<dbReference type="CDD" id="cd07434">
    <property type="entry name" value="PHP_PolIIIA_DnaE2"/>
    <property type="match status" value="1"/>
</dbReference>
<dbReference type="Gene3D" id="1.10.150.870">
    <property type="match status" value="1"/>
</dbReference>
<dbReference type="Gene3D" id="3.20.20.140">
    <property type="entry name" value="Metal-dependent hydrolases"/>
    <property type="match status" value="1"/>
</dbReference>
<dbReference type="HAMAP" id="MF_01902">
    <property type="entry name" value="DNApol_error_prone"/>
    <property type="match status" value="1"/>
</dbReference>
<dbReference type="InterPro" id="IPR011708">
    <property type="entry name" value="DNA_pol3_alpha_NTPase_dom"/>
</dbReference>
<dbReference type="InterPro" id="IPR040982">
    <property type="entry name" value="DNA_pol3_finger"/>
</dbReference>
<dbReference type="InterPro" id="IPR023073">
    <property type="entry name" value="DnaE2"/>
</dbReference>
<dbReference type="InterPro" id="IPR004805">
    <property type="entry name" value="DnaE2/DnaE/PolC"/>
</dbReference>
<dbReference type="InterPro" id="IPR029460">
    <property type="entry name" value="DNAPol_HHH"/>
</dbReference>
<dbReference type="InterPro" id="IPR004365">
    <property type="entry name" value="NA-bd_OB_tRNA"/>
</dbReference>
<dbReference type="InterPro" id="IPR004013">
    <property type="entry name" value="PHP_dom"/>
</dbReference>
<dbReference type="InterPro" id="IPR003141">
    <property type="entry name" value="Pol/His_phosphatase_N"/>
</dbReference>
<dbReference type="InterPro" id="IPR016195">
    <property type="entry name" value="Pol/histidinol_Pase-like"/>
</dbReference>
<dbReference type="NCBIfam" id="TIGR00594">
    <property type="entry name" value="polc"/>
    <property type="match status" value="1"/>
</dbReference>
<dbReference type="NCBIfam" id="NF004225">
    <property type="entry name" value="PRK05672.1"/>
    <property type="match status" value="1"/>
</dbReference>
<dbReference type="PANTHER" id="PTHR32294">
    <property type="entry name" value="DNA POLYMERASE III SUBUNIT ALPHA"/>
    <property type="match status" value="1"/>
</dbReference>
<dbReference type="PANTHER" id="PTHR32294:SF4">
    <property type="entry name" value="ERROR-PRONE DNA POLYMERASE"/>
    <property type="match status" value="1"/>
</dbReference>
<dbReference type="Pfam" id="PF07733">
    <property type="entry name" value="DNA_pol3_alpha"/>
    <property type="match status" value="1"/>
</dbReference>
<dbReference type="Pfam" id="PF17657">
    <property type="entry name" value="DNA_pol3_finger"/>
    <property type="match status" value="1"/>
</dbReference>
<dbReference type="Pfam" id="PF14579">
    <property type="entry name" value="HHH_6"/>
    <property type="match status" value="1"/>
</dbReference>
<dbReference type="Pfam" id="PF02811">
    <property type="entry name" value="PHP"/>
    <property type="match status" value="1"/>
</dbReference>
<dbReference type="Pfam" id="PF01336">
    <property type="entry name" value="tRNA_anti-codon"/>
    <property type="match status" value="1"/>
</dbReference>
<dbReference type="SMART" id="SM00481">
    <property type="entry name" value="POLIIIAc"/>
    <property type="match status" value="1"/>
</dbReference>
<dbReference type="SUPFAM" id="SSF89550">
    <property type="entry name" value="PHP domain-like"/>
    <property type="match status" value="1"/>
</dbReference>
<protein>
    <recommendedName>
        <fullName evidence="1">Error-prone DNA polymerase</fullName>
        <ecNumber evidence="1">2.7.7.7</ecNumber>
    </recommendedName>
</protein>
<name>DNAE2_RHOBA</name>
<feature type="chain" id="PRO_0000103397" description="Error-prone DNA polymerase">
    <location>
        <begin position="1"/>
        <end position="1145"/>
    </location>
</feature>
<keyword id="KW-0963">Cytoplasm</keyword>
<keyword id="KW-0227">DNA damage</keyword>
<keyword id="KW-0234">DNA repair</keyword>
<keyword id="KW-0235">DNA replication</keyword>
<keyword id="KW-0239">DNA-directed DNA polymerase</keyword>
<keyword id="KW-0548">Nucleotidyltransferase</keyword>
<keyword id="KW-1185">Reference proteome</keyword>
<keyword id="KW-0808">Transferase</keyword>
<organism>
    <name type="scientific">Rhodopirellula baltica (strain DSM 10527 / NCIMB 13988 / SH1)</name>
    <dbReference type="NCBI Taxonomy" id="243090"/>
    <lineage>
        <taxon>Bacteria</taxon>
        <taxon>Pseudomonadati</taxon>
        <taxon>Planctomycetota</taxon>
        <taxon>Planctomycetia</taxon>
        <taxon>Pirellulales</taxon>
        <taxon>Pirellulaceae</taxon>
        <taxon>Rhodopirellula</taxon>
    </lineage>
</organism>
<reference key="1">
    <citation type="journal article" date="2003" name="Proc. Natl. Acad. Sci. U.S.A.">
        <title>Complete genome sequence of the marine planctomycete Pirellula sp. strain 1.</title>
        <authorList>
            <person name="Gloeckner F.O."/>
            <person name="Kube M."/>
            <person name="Bauer M."/>
            <person name="Teeling H."/>
            <person name="Lombardot T."/>
            <person name="Ludwig W."/>
            <person name="Gade D."/>
            <person name="Beck A."/>
            <person name="Borzym K."/>
            <person name="Heitmann K."/>
            <person name="Rabus R."/>
            <person name="Schlesner H."/>
            <person name="Amann R."/>
            <person name="Reinhardt R."/>
        </authorList>
    </citation>
    <scope>NUCLEOTIDE SEQUENCE [LARGE SCALE GENOMIC DNA]</scope>
    <source>
        <strain>DSM 10527 / NCIMB 13988 / SH1</strain>
    </source>
</reference>
<proteinExistence type="inferred from homology"/>
<gene>
    <name evidence="1" type="primary">dnaE2</name>
    <name type="ordered locus">RB1262</name>
</gene>
<comment type="function">
    <text evidence="1">DNA polymerase involved in damage-induced mutagenesis and translesion synthesis (TLS). It is not the major replicative DNA polymerase.</text>
</comment>
<comment type="catalytic activity">
    <reaction evidence="1">
        <text>DNA(n) + a 2'-deoxyribonucleoside 5'-triphosphate = DNA(n+1) + diphosphate</text>
        <dbReference type="Rhea" id="RHEA:22508"/>
        <dbReference type="Rhea" id="RHEA-COMP:17339"/>
        <dbReference type="Rhea" id="RHEA-COMP:17340"/>
        <dbReference type="ChEBI" id="CHEBI:33019"/>
        <dbReference type="ChEBI" id="CHEBI:61560"/>
        <dbReference type="ChEBI" id="CHEBI:173112"/>
        <dbReference type="EC" id="2.7.7.7"/>
    </reaction>
</comment>
<comment type="subcellular location">
    <subcellularLocation>
        <location evidence="1">Cytoplasm</location>
    </subcellularLocation>
</comment>
<comment type="similarity">
    <text evidence="1">Belongs to the DNA polymerase type-C family. DnaE2 subfamily.</text>
</comment>
<accession>Q7UXK9</accession>
<evidence type="ECO:0000255" key="1">
    <source>
        <dbReference type="HAMAP-Rule" id="MF_01902"/>
    </source>
</evidence>
<sequence length="1145" mass="128627">MCSWRCAAARSHASANRCTPKERLGRQENRSAHCPGTIRSIRMEWSRWERQEFRCKRSFQRLGSSCEQFSPPMQNRRWEIERLPWRFSPVGKPFHFRDNVRAMRYVELHCRSNFSFLDGASHPDELVQRAAELGYEGLAITDRESIAGVVRGFSPAQELGLQYIVGTEVHPTDAPPMVLWPTDRAAYGRMCRMLSTGRMRCEKGRCELSFEDIAEHAQGILAGVIATDESRSIEDQHAHVNDSRQFLRGPFRDVFDDRGYLLASFHRGVDDAAKATWLRNLSLATDVPLLACGDVRYHSAERMALHDCVVAISQGKSVEQIQSDRLVNSQHHLRSLEEIAELYRDVPDAVARTIEVAQRCTFTLDQLKYEYPVELAPEGMTPIEHLKRLTWEGARGRWPNGVPEKVIETLRHEVTLIEDLQYEAYFLTVWDLVRFARSQEILCQGRGSAANSVVCYCLGITSVDPTHTDLLFERFISRERGEAPDIDVDFEHQRREEVLQYLYEKYGRDRAGMTAVVTCYRAKSAIREVGKALAISPDIIDAVAKLAGSYSRNPELPERCRDAGLDPDTPLGRRFLYLTETLIGFPRHLSQHVGGMVMTAGSLCELCVTENAAMPGRSVIQWNKDDLDDIGILKVDILALGMLSAIRRCFELVKDHHNRELSLSTIPPDDTPTYDMICAADTMGVFQIESRAQMSMLPRLKPRCYYDLVIEVAIVRPGPIQGNMVHPFLAARENPAAAKYPNDAIRKVLEKTLGVPIFQEQAMKLAVVAAGFTPGEADQLRRAMAAWRRPGVIDRFRTKLLEGMKANGLNGEFAENVFRQIRGFGEYGFPESHAASFALLVYASCYLKRHYPTAFCAALLDSQPMGFYAPAQLIRDAQQHGVQVLPVDINDSNIRSKLIPDLNRPHPKLRLGLQMVRGLPSAVAQKIIVARDANGPFANLHDLTTRAKLSRSNIATLADADALASIAQDRRAAVWQSLAQDDSGDSMPLLADLEPDCSVPEELVPMSPAEEVKNDYATTGLSLKAHPVSFWRDDLNALRCKRASDLPKLRDGVHVRVAGLVLMRQRPGTAKGITFVTMEDETGSMNLVLFAQVWKRFFKIARGSDAWIVDGKLENKKGVIHVIVGRVEDLSEKASGLKVPRRDFR</sequence>